<name>RBFA_SHESR</name>
<gene>
    <name evidence="1" type="primary">rbfA</name>
    <name type="ordered locus">Shewmr7_1092</name>
</gene>
<evidence type="ECO:0000255" key="1">
    <source>
        <dbReference type="HAMAP-Rule" id="MF_00003"/>
    </source>
</evidence>
<evidence type="ECO:0000256" key="2">
    <source>
        <dbReference type="SAM" id="MobiDB-lite"/>
    </source>
</evidence>
<organism>
    <name type="scientific">Shewanella sp. (strain MR-7)</name>
    <dbReference type="NCBI Taxonomy" id="60481"/>
    <lineage>
        <taxon>Bacteria</taxon>
        <taxon>Pseudomonadati</taxon>
        <taxon>Pseudomonadota</taxon>
        <taxon>Gammaproteobacteria</taxon>
        <taxon>Alteromonadales</taxon>
        <taxon>Shewanellaceae</taxon>
        <taxon>Shewanella</taxon>
    </lineage>
</organism>
<reference key="1">
    <citation type="submission" date="2006-08" db="EMBL/GenBank/DDBJ databases">
        <title>Complete sequence of chromosome 1 of Shewanella sp. MR-7.</title>
        <authorList>
            <person name="Copeland A."/>
            <person name="Lucas S."/>
            <person name="Lapidus A."/>
            <person name="Barry K."/>
            <person name="Detter J.C."/>
            <person name="Glavina del Rio T."/>
            <person name="Hammon N."/>
            <person name="Israni S."/>
            <person name="Dalin E."/>
            <person name="Tice H."/>
            <person name="Pitluck S."/>
            <person name="Kiss H."/>
            <person name="Brettin T."/>
            <person name="Bruce D."/>
            <person name="Han C."/>
            <person name="Tapia R."/>
            <person name="Gilna P."/>
            <person name="Schmutz J."/>
            <person name="Larimer F."/>
            <person name="Land M."/>
            <person name="Hauser L."/>
            <person name="Kyrpides N."/>
            <person name="Mikhailova N."/>
            <person name="Nealson K."/>
            <person name="Konstantinidis K."/>
            <person name="Klappenbach J."/>
            <person name="Tiedje J."/>
            <person name="Richardson P."/>
        </authorList>
    </citation>
    <scope>NUCLEOTIDE SEQUENCE [LARGE SCALE GENOMIC DNA]</scope>
    <source>
        <strain>MR-7</strain>
    </source>
</reference>
<keyword id="KW-0963">Cytoplasm</keyword>
<keyword id="KW-0690">Ribosome biogenesis</keyword>
<feature type="chain" id="PRO_1000000207" description="Ribosome-binding factor A">
    <location>
        <begin position="1"/>
        <end position="146"/>
    </location>
</feature>
<feature type="region of interest" description="Disordered" evidence="2">
    <location>
        <begin position="122"/>
        <end position="146"/>
    </location>
</feature>
<feature type="compositionally biased region" description="Acidic residues" evidence="2">
    <location>
        <begin position="130"/>
        <end position="146"/>
    </location>
</feature>
<dbReference type="EMBL" id="CP000444">
    <property type="protein sequence ID" value="ABI42091.1"/>
    <property type="molecule type" value="Genomic_DNA"/>
</dbReference>
<dbReference type="SMR" id="Q0HXR4"/>
<dbReference type="KEGG" id="shm:Shewmr7_1092"/>
<dbReference type="HOGENOM" id="CLU_089475_5_0_6"/>
<dbReference type="GO" id="GO:0005829">
    <property type="term" value="C:cytosol"/>
    <property type="evidence" value="ECO:0007669"/>
    <property type="project" value="TreeGrafter"/>
</dbReference>
<dbReference type="GO" id="GO:0043024">
    <property type="term" value="F:ribosomal small subunit binding"/>
    <property type="evidence" value="ECO:0007669"/>
    <property type="project" value="TreeGrafter"/>
</dbReference>
<dbReference type="GO" id="GO:0030490">
    <property type="term" value="P:maturation of SSU-rRNA"/>
    <property type="evidence" value="ECO:0007669"/>
    <property type="project" value="UniProtKB-UniRule"/>
</dbReference>
<dbReference type="FunFam" id="3.30.300.20:FF:000007">
    <property type="entry name" value="Ribosome-binding factor A"/>
    <property type="match status" value="1"/>
</dbReference>
<dbReference type="Gene3D" id="3.30.300.20">
    <property type="match status" value="1"/>
</dbReference>
<dbReference type="HAMAP" id="MF_00003">
    <property type="entry name" value="RbfA"/>
    <property type="match status" value="1"/>
</dbReference>
<dbReference type="InterPro" id="IPR015946">
    <property type="entry name" value="KH_dom-like_a/b"/>
</dbReference>
<dbReference type="InterPro" id="IPR000238">
    <property type="entry name" value="RbfA"/>
</dbReference>
<dbReference type="InterPro" id="IPR023799">
    <property type="entry name" value="RbfA_dom_sf"/>
</dbReference>
<dbReference type="InterPro" id="IPR020053">
    <property type="entry name" value="Ribosome-bd_factorA_CS"/>
</dbReference>
<dbReference type="NCBIfam" id="TIGR00082">
    <property type="entry name" value="rbfA"/>
    <property type="match status" value="1"/>
</dbReference>
<dbReference type="PANTHER" id="PTHR33515">
    <property type="entry name" value="RIBOSOME-BINDING FACTOR A, CHLOROPLASTIC-RELATED"/>
    <property type="match status" value="1"/>
</dbReference>
<dbReference type="PANTHER" id="PTHR33515:SF1">
    <property type="entry name" value="RIBOSOME-BINDING FACTOR A, CHLOROPLASTIC-RELATED"/>
    <property type="match status" value="1"/>
</dbReference>
<dbReference type="Pfam" id="PF02033">
    <property type="entry name" value="RBFA"/>
    <property type="match status" value="1"/>
</dbReference>
<dbReference type="SUPFAM" id="SSF89919">
    <property type="entry name" value="Ribosome-binding factor A, RbfA"/>
    <property type="match status" value="1"/>
</dbReference>
<dbReference type="PROSITE" id="PS01319">
    <property type="entry name" value="RBFA"/>
    <property type="match status" value="1"/>
</dbReference>
<sequence>MAKEFSRTRRIGQQLQQELAVVLQRDMKDPRIGFVTVNDVDVSRDLSYAKVFVTFFEEDKEVVQEKLNALIAAAPYIRTLVAGRMKLRVMPEIRFVYDSSLVEGMRMSNLVSQVINSDKAKQQQFGSVDDVTENDIDEADDTEGKA</sequence>
<accession>Q0HXR4</accession>
<comment type="function">
    <text evidence="1">One of several proteins that assist in the late maturation steps of the functional core of the 30S ribosomal subunit. Associates with free 30S ribosomal subunits (but not with 30S subunits that are part of 70S ribosomes or polysomes). Required for efficient processing of 16S rRNA. May interact with the 5'-terminal helix region of 16S rRNA.</text>
</comment>
<comment type="subunit">
    <text evidence="1">Monomer. Binds 30S ribosomal subunits, but not 50S ribosomal subunits or 70S ribosomes.</text>
</comment>
<comment type="subcellular location">
    <subcellularLocation>
        <location evidence="1">Cytoplasm</location>
    </subcellularLocation>
</comment>
<comment type="similarity">
    <text evidence="1">Belongs to the RbfA family.</text>
</comment>
<protein>
    <recommendedName>
        <fullName evidence="1">Ribosome-binding factor A</fullName>
    </recommendedName>
</protein>
<proteinExistence type="inferred from homology"/>